<protein>
    <recommendedName>
        <fullName evidence="1">Small ribosomal subunit protein bS21</fullName>
    </recommendedName>
    <alternativeName>
        <fullName evidence="2">30S ribosomal protein S21</fullName>
    </alternativeName>
</protein>
<proteinExistence type="inferred from homology"/>
<keyword id="KW-0687">Ribonucleoprotein</keyword>
<keyword id="KW-0689">Ribosomal protein</keyword>
<gene>
    <name evidence="1" type="primary">rpsU</name>
    <name type="ordered locus">HPP12_0568</name>
</gene>
<evidence type="ECO:0000255" key="1">
    <source>
        <dbReference type="HAMAP-Rule" id="MF_00358"/>
    </source>
</evidence>
<evidence type="ECO:0000305" key="2"/>
<name>RS21_HELP2</name>
<feature type="chain" id="PRO_1000120626" description="Small ribosomal subunit protein bS21">
    <location>
        <begin position="1"/>
        <end position="70"/>
    </location>
</feature>
<dbReference type="EMBL" id="CP001217">
    <property type="protein sequence ID" value="ACJ07722.1"/>
    <property type="molecule type" value="Genomic_DNA"/>
</dbReference>
<dbReference type="SMR" id="B6JLE4"/>
<dbReference type="KEGG" id="hpp:HPP12_0568"/>
<dbReference type="HOGENOM" id="CLU_159258_1_1_7"/>
<dbReference type="Proteomes" id="UP000008198">
    <property type="component" value="Chromosome"/>
</dbReference>
<dbReference type="GO" id="GO:1990904">
    <property type="term" value="C:ribonucleoprotein complex"/>
    <property type="evidence" value="ECO:0007669"/>
    <property type="project" value="UniProtKB-KW"/>
</dbReference>
<dbReference type="GO" id="GO:0005840">
    <property type="term" value="C:ribosome"/>
    <property type="evidence" value="ECO:0007669"/>
    <property type="project" value="UniProtKB-KW"/>
</dbReference>
<dbReference type="GO" id="GO:0003735">
    <property type="term" value="F:structural constituent of ribosome"/>
    <property type="evidence" value="ECO:0007669"/>
    <property type="project" value="InterPro"/>
</dbReference>
<dbReference type="GO" id="GO:0006412">
    <property type="term" value="P:translation"/>
    <property type="evidence" value="ECO:0007669"/>
    <property type="project" value="UniProtKB-UniRule"/>
</dbReference>
<dbReference type="Gene3D" id="1.20.5.1150">
    <property type="entry name" value="Ribosomal protein S8"/>
    <property type="match status" value="1"/>
</dbReference>
<dbReference type="HAMAP" id="MF_00358">
    <property type="entry name" value="Ribosomal_bS21"/>
    <property type="match status" value="1"/>
</dbReference>
<dbReference type="InterPro" id="IPR001911">
    <property type="entry name" value="Ribosomal_bS21"/>
</dbReference>
<dbReference type="InterPro" id="IPR018278">
    <property type="entry name" value="Ribosomal_bS21_CS"/>
</dbReference>
<dbReference type="InterPro" id="IPR038380">
    <property type="entry name" value="Ribosomal_bS21_sf"/>
</dbReference>
<dbReference type="NCBIfam" id="TIGR00030">
    <property type="entry name" value="S21p"/>
    <property type="match status" value="1"/>
</dbReference>
<dbReference type="Pfam" id="PF01165">
    <property type="entry name" value="Ribosomal_S21"/>
    <property type="match status" value="1"/>
</dbReference>
<dbReference type="PRINTS" id="PR00976">
    <property type="entry name" value="RIBOSOMALS21"/>
</dbReference>
<dbReference type="PROSITE" id="PS01181">
    <property type="entry name" value="RIBOSOMAL_S21"/>
    <property type="match status" value="1"/>
</dbReference>
<sequence length="70" mass="8613">MPGIKVREGDAFDEAYRRFKKQTDRNLVVTECRARRFFESKTEKRKKQKISAKKKVLKRLYMLRRYESRL</sequence>
<comment type="similarity">
    <text evidence="1">Belongs to the bacterial ribosomal protein bS21 family.</text>
</comment>
<reference key="1">
    <citation type="submission" date="2008-10" db="EMBL/GenBank/DDBJ databases">
        <title>The complete genome sequence of Helicobacter pylori strain P12.</title>
        <authorList>
            <person name="Fischer W."/>
            <person name="Windhager L."/>
            <person name="Karnholz A."/>
            <person name="Zeiller M."/>
            <person name="Zimmer R."/>
            <person name="Haas R."/>
        </authorList>
    </citation>
    <scope>NUCLEOTIDE SEQUENCE [LARGE SCALE GENOMIC DNA]</scope>
    <source>
        <strain>P12</strain>
    </source>
</reference>
<accession>B6JLE4</accession>
<organism>
    <name type="scientific">Helicobacter pylori (strain P12)</name>
    <dbReference type="NCBI Taxonomy" id="570508"/>
    <lineage>
        <taxon>Bacteria</taxon>
        <taxon>Pseudomonadati</taxon>
        <taxon>Campylobacterota</taxon>
        <taxon>Epsilonproteobacteria</taxon>
        <taxon>Campylobacterales</taxon>
        <taxon>Helicobacteraceae</taxon>
        <taxon>Helicobacter</taxon>
    </lineage>
</organism>